<sequence length="126" mass="13693">MGKKSLVKLTRKTNPRIVSLILTLKERANGDSAPIWKDIAKRLEAPSRNYAAVNISKINRHTAEDDVLLIPGKVLGAGLLDHPVTIAALTFSDSAFEKITEAGGKCLSLEEIMEANPKGSGIRIFR</sequence>
<evidence type="ECO:0000255" key="1">
    <source>
        <dbReference type="HAMAP-Rule" id="MF_00329"/>
    </source>
</evidence>
<evidence type="ECO:0000305" key="2"/>
<keyword id="KW-1185">Reference proteome</keyword>
<keyword id="KW-0687">Ribonucleoprotein</keyword>
<keyword id="KW-0689">Ribosomal protein</keyword>
<organism>
    <name type="scientific">Methanosarcina acetivorans (strain ATCC 35395 / DSM 2834 / JCM 12185 / C2A)</name>
    <dbReference type="NCBI Taxonomy" id="188937"/>
    <lineage>
        <taxon>Archaea</taxon>
        <taxon>Methanobacteriati</taxon>
        <taxon>Methanobacteriota</taxon>
        <taxon>Stenosarchaea group</taxon>
        <taxon>Methanomicrobia</taxon>
        <taxon>Methanosarcinales</taxon>
        <taxon>Methanosarcinaceae</taxon>
        <taxon>Methanosarcina</taxon>
    </lineage>
</organism>
<comment type="similarity">
    <text evidence="1">Belongs to the eukaryotic ribosomal protein eL18 family.</text>
</comment>
<comment type="sequence caution" evidence="2">
    <conflict type="erroneous initiation">
        <sequence resource="EMBL-CDS" id="AAM04039"/>
    </conflict>
</comment>
<protein>
    <recommendedName>
        <fullName evidence="1">Large ribosomal subunit protein eL18</fullName>
    </recommendedName>
    <alternativeName>
        <fullName evidence="2">50S ribosomal protein L18e</fullName>
    </alternativeName>
</protein>
<feature type="chain" id="PRO_0000132789" description="Large ribosomal subunit protein eL18">
    <location>
        <begin position="1"/>
        <end position="126"/>
    </location>
</feature>
<accession>Q8TT44</accession>
<gene>
    <name evidence="1" type="primary">rpl18e</name>
    <name type="ordered locus">MA_0595</name>
</gene>
<proteinExistence type="inferred from homology"/>
<dbReference type="EMBL" id="AE010299">
    <property type="protein sequence ID" value="AAM04039.1"/>
    <property type="status" value="ALT_INIT"/>
    <property type="molecule type" value="Genomic_DNA"/>
</dbReference>
<dbReference type="RefSeq" id="WP_048064921.1">
    <property type="nucleotide sequence ID" value="NC_003552.1"/>
</dbReference>
<dbReference type="SMR" id="Q8TT44"/>
<dbReference type="FunCoup" id="Q8TT44">
    <property type="interactions" value="141"/>
</dbReference>
<dbReference type="STRING" id="188937.MA_0595"/>
<dbReference type="EnsemblBacteria" id="AAM04039">
    <property type="protein sequence ID" value="AAM04039"/>
    <property type="gene ID" value="MA_0595"/>
</dbReference>
<dbReference type="GeneID" id="1472487"/>
<dbReference type="KEGG" id="mac:MA_0595"/>
<dbReference type="HOGENOM" id="CLU_146465_0_0_2"/>
<dbReference type="InParanoid" id="Q8TT44"/>
<dbReference type="OrthoDB" id="11309at2157"/>
<dbReference type="PhylomeDB" id="Q8TT44"/>
<dbReference type="Proteomes" id="UP000002487">
    <property type="component" value="Chromosome"/>
</dbReference>
<dbReference type="GO" id="GO:0022625">
    <property type="term" value="C:cytosolic large ribosomal subunit"/>
    <property type="evidence" value="ECO:0000318"/>
    <property type="project" value="GO_Central"/>
</dbReference>
<dbReference type="GO" id="GO:0003723">
    <property type="term" value="F:RNA binding"/>
    <property type="evidence" value="ECO:0000318"/>
    <property type="project" value="GO_Central"/>
</dbReference>
<dbReference type="GO" id="GO:0003735">
    <property type="term" value="F:structural constituent of ribosome"/>
    <property type="evidence" value="ECO:0000318"/>
    <property type="project" value="GO_Central"/>
</dbReference>
<dbReference type="GO" id="GO:0006412">
    <property type="term" value="P:translation"/>
    <property type="evidence" value="ECO:0007669"/>
    <property type="project" value="UniProtKB-UniRule"/>
</dbReference>
<dbReference type="FunFam" id="3.100.10.10:FF:000013">
    <property type="entry name" value="50S ribosomal protein L18e"/>
    <property type="match status" value="1"/>
</dbReference>
<dbReference type="Gene3D" id="3.100.10.10">
    <property type="match status" value="1"/>
</dbReference>
<dbReference type="HAMAP" id="MF_00329">
    <property type="entry name" value="Ribosomal_eL18"/>
    <property type="match status" value="1"/>
</dbReference>
<dbReference type="InterPro" id="IPR000039">
    <property type="entry name" value="Ribosomal_eL18"/>
</dbReference>
<dbReference type="InterPro" id="IPR021132">
    <property type="entry name" value="Ribosomal_eL18/eL18-A/B/_CS"/>
</dbReference>
<dbReference type="InterPro" id="IPR022947">
    <property type="entry name" value="Ribosomal_eL18_arc"/>
</dbReference>
<dbReference type="InterPro" id="IPR021131">
    <property type="entry name" value="Ribosomal_uL15/eL18"/>
</dbReference>
<dbReference type="InterPro" id="IPR036227">
    <property type="entry name" value="Ribosomal_uL15/eL18_sf"/>
</dbReference>
<dbReference type="InterPro" id="IPR001196">
    <property type="entry name" value="Ribosomal_uL15_CS"/>
</dbReference>
<dbReference type="NCBIfam" id="NF003079">
    <property type="entry name" value="PRK04005.1"/>
    <property type="match status" value="1"/>
</dbReference>
<dbReference type="PANTHER" id="PTHR10934">
    <property type="entry name" value="60S RIBOSOMAL PROTEIN L18"/>
    <property type="match status" value="1"/>
</dbReference>
<dbReference type="PANTHER" id="PTHR10934:SF2">
    <property type="entry name" value="LARGE RIBOSOMAL SUBUNIT PROTEIN EL18"/>
    <property type="match status" value="1"/>
</dbReference>
<dbReference type="Pfam" id="PF17135">
    <property type="entry name" value="Ribosomal_L18"/>
    <property type="match status" value="1"/>
</dbReference>
<dbReference type="SUPFAM" id="SSF52080">
    <property type="entry name" value="Ribosomal proteins L15p and L18e"/>
    <property type="match status" value="1"/>
</dbReference>
<dbReference type="PROSITE" id="PS01106">
    <property type="entry name" value="RIBOSOMAL_L18E"/>
    <property type="match status" value="1"/>
</dbReference>
<reference key="1">
    <citation type="journal article" date="2002" name="Genome Res.">
        <title>The genome of Methanosarcina acetivorans reveals extensive metabolic and physiological diversity.</title>
        <authorList>
            <person name="Galagan J.E."/>
            <person name="Nusbaum C."/>
            <person name="Roy A."/>
            <person name="Endrizzi M.G."/>
            <person name="Macdonald P."/>
            <person name="FitzHugh W."/>
            <person name="Calvo S."/>
            <person name="Engels R."/>
            <person name="Smirnov S."/>
            <person name="Atnoor D."/>
            <person name="Brown A."/>
            <person name="Allen N."/>
            <person name="Naylor J."/>
            <person name="Stange-Thomann N."/>
            <person name="DeArellano K."/>
            <person name="Johnson R."/>
            <person name="Linton L."/>
            <person name="McEwan P."/>
            <person name="McKernan K."/>
            <person name="Talamas J."/>
            <person name="Tirrell A."/>
            <person name="Ye W."/>
            <person name="Zimmer A."/>
            <person name="Barber R.D."/>
            <person name="Cann I."/>
            <person name="Graham D.E."/>
            <person name="Grahame D.A."/>
            <person name="Guss A.M."/>
            <person name="Hedderich R."/>
            <person name="Ingram-Smith C."/>
            <person name="Kuettner H.C."/>
            <person name="Krzycki J.A."/>
            <person name="Leigh J.A."/>
            <person name="Li W."/>
            <person name="Liu J."/>
            <person name="Mukhopadhyay B."/>
            <person name="Reeve J.N."/>
            <person name="Smith K."/>
            <person name="Springer T.A."/>
            <person name="Umayam L.A."/>
            <person name="White O."/>
            <person name="White R.H."/>
            <person name="de Macario E.C."/>
            <person name="Ferry J.G."/>
            <person name="Jarrell K.F."/>
            <person name="Jing H."/>
            <person name="Macario A.J.L."/>
            <person name="Paulsen I.T."/>
            <person name="Pritchett M."/>
            <person name="Sowers K.R."/>
            <person name="Swanson R.V."/>
            <person name="Zinder S.H."/>
            <person name="Lander E."/>
            <person name="Metcalf W.W."/>
            <person name="Birren B."/>
        </authorList>
    </citation>
    <scope>NUCLEOTIDE SEQUENCE [LARGE SCALE GENOMIC DNA]</scope>
    <source>
        <strain>ATCC 35395 / DSM 2834 / JCM 12185 / C2A</strain>
    </source>
</reference>
<name>RL18E_METAC</name>